<feature type="chain" id="PRO_0000122908" description="Protein RecA">
    <location>
        <begin position="1"/>
        <end position="347"/>
    </location>
</feature>
<feature type="region of interest" description="Disordered" evidence="2">
    <location>
        <begin position="327"/>
        <end position="347"/>
    </location>
</feature>
<feature type="compositionally biased region" description="Basic and acidic residues" evidence="2">
    <location>
        <begin position="327"/>
        <end position="336"/>
    </location>
</feature>
<feature type="compositionally biased region" description="Acidic residues" evidence="2">
    <location>
        <begin position="337"/>
        <end position="347"/>
    </location>
</feature>
<feature type="binding site" evidence="1">
    <location>
        <begin position="65"/>
        <end position="72"/>
    </location>
    <ligand>
        <name>ATP</name>
        <dbReference type="ChEBI" id="CHEBI:30616"/>
    </ligand>
</feature>
<sequence length="347" mass="37610">MDENKKRALSVALSQIEKQFGKGSVMRMGDRVIEAVEAIPTGSLMLDLALGIGGLPKGRVVEIYGPESSGKTTLTLQAIAQCQKKGGTAAFIDAEHALDPIYAGKLGVNVDDLLLSQPDTGEQALEIADMLVRSGSIDIMVIDSVAALTPRAEIEGEMGDQLPGLQARLMSQALRKLTGNIKRSNTLVIFINQLRMKIGVMMPGQSPETTTGGNALKFYASVRLDIRRIGAIKKGDEIIGNQTKIKVVKNKLAPPFKQVVTEILYGEGISREGELIEMGVEAKLVEKAGAWYSYGGERIGQGKDNARGYLRENPHLAAKLEADLREKFEPTELSREEGDEDTLEDTM</sequence>
<proteinExistence type="inferred from homology"/>
<gene>
    <name evidence="1" type="primary">recA</name>
    <name type="ordered locus">XF_0123</name>
</gene>
<protein>
    <recommendedName>
        <fullName evidence="1">Protein RecA</fullName>
    </recommendedName>
    <alternativeName>
        <fullName evidence="1">Recombinase A</fullName>
    </alternativeName>
</protein>
<keyword id="KW-0067">ATP-binding</keyword>
<keyword id="KW-0963">Cytoplasm</keyword>
<keyword id="KW-0227">DNA damage</keyword>
<keyword id="KW-0233">DNA recombination</keyword>
<keyword id="KW-0234">DNA repair</keyword>
<keyword id="KW-0238">DNA-binding</keyword>
<keyword id="KW-0547">Nucleotide-binding</keyword>
<keyword id="KW-0742">SOS response</keyword>
<name>RECA_XYLFA</name>
<evidence type="ECO:0000255" key="1">
    <source>
        <dbReference type="HAMAP-Rule" id="MF_00268"/>
    </source>
</evidence>
<evidence type="ECO:0000256" key="2">
    <source>
        <dbReference type="SAM" id="MobiDB-lite"/>
    </source>
</evidence>
<organism>
    <name type="scientific">Xylella fastidiosa (strain 9a5c)</name>
    <dbReference type="NCBI Taxonomy" id="160492"/>
    <lineage>
        <taxon>Bacteria</taxon>
        <taxon>Pseudomonadati</taxon>
        <taxon>Pseudomonadota</taxon>
        <taxon>Gammaproteobacteria</taxon>
        <taxon>Lysobacterales</taxon>
        <taxon>Lysobacteraceae</taxon>
        <taxon>Xylella</taxon>
    </lineage>
</organism>
<accession>Q9PH23</accession>
<reference key="1">
    <citation type="journal article" date="2000" name="Nature">
        <title>The genome sequence of the plant pathogen Xylella fastidiosa.</title>
        <authorList>
            <person name="Simpson A.J.G."/>
            <person name="Reinach F.C."/>
            <person name="Arruda P."/>
            <person name="Abreu F.A."/>
            <person name="Acencio M."/>
            <person name="Alvarenga R."/>
            <person name="Alves L.M.C."/>
            <person name="Araya J.E."/>
            <person name="Baia G.S."/>
            <person name="Baptista C.S."/>
            <person name="Barros M.H."/>
            <person name="Bonaccorsi E.D."/>
            <person name="Bordin S."/>
            <person name="Bove J.M."/>
            <person name="Briones M.R.S."/>
            <person name="Bueno M.R.P."/>
            <person name="Camargo A.A."/>
            <person name="Camargo L.E.A."/>
            <person name="Carraro D.M."/>
            <person name="Carrer H."/>
            <person name="Colauto N.B."/>
            <person name="Colombo C."/>
            <person name="Costa F.F."/>
            <person name="Costa M.C.R."/>
            <person name="Costa-Neto C.M."/>
            <person name="Coutinho L.L."/>
            <person name="Cristofani M."/>
            <person name="Dias-Neto E."/>
            <person name="Docena C."/>
            <person name="El-Dorry H."/>
            <person name="Facincani A.P."/>
            <person name="Ferreira A.J.S."/>
            <person name="Ferreira V.C.A."/>
            <person name="Ferro J.A."/>
            <person name="Fraga J.S."/>
            <person name="Franca S.C."/>
            <person name="Franco M.C."/>
            <person name="Frohme M."/>
            <person name="Furlan L.R."/>
            <person name="Garnier M."/>
            <person name="Goldman G.H."/>
            <person name="Goldman M.H.S."/>
            <person name="Gomes S.L."/>
            <person name="Gruber A."/>
            <person name="Ho P.L."/>
            <person name="Hoheisel J.D."/>
            <person name="Junqueira M.L."/>
            <person name="Kemper E.L."/>
            <person name="Kitajima J.P."/>
            <person name="Krieger J.E."/>
            <person name="Kuramae E.E."/>
            <person name="Laigret F."/>
            <person name="Lambais M.R."/>
            <person name="Leite L.C.C."/>
            <person name="Lemos E.G.M."/>
            <person name="Lemos M.V.F."/>
            <person name="Lopes S.A."/>
            <person name="Lopes C.R."/>
            <person name="Machado J.A."/>
            <person name="Machado M.A."/>
            <person name="Madeira A.M.B.N."/>
            <person name="Madeira H.M.F."/>
            <person name="Marino C.L."/>
            <person name="Marques M.V."/>
            <person name="Martins E.A.L."/>
            <person name="Martins E.M.F."/>
            <person name="Matsukuma A.Y."/>
            <person name="Menck C.F.M."/>
            <person name="Miracca E.C."/>
            <person name="Miyaki C.Y."/>
            <person name="Monteiro-Vitorello C.B."/>
            <person name="Moon D.H."/>
            <person name="Nagai M.A."/>
            <person name="Nascimento A.L.T.O."/>
            <person name="Netto L.E.S."/>
            <person name="Nhani A. Jr."/>
            <person name="Nobrega F.G."/>
            <person name="Nunes L.R."/>
            <person name="Oliveira M.A."/>
            <person name="de Oliveira M.C."/>
            <person name="de Oliveira R.C."/>
            <person name="Palmieri D.A."/>
            <person name="Paris A."/>
            <person name="Peixoto B.R."/>
            <person name="Pereira G.A.G."/>
            <person name="Pereira H.A. Jr."/>
            <person name="Pesquero J.B."/>
            <person name="Quaggio R.B."/>
            <person name="Roberto P.G."/>
            <person name="Rodrigues V."/>
            <person name="de Rosa A.J.M."/>
            <person name="de Rosa V.E. Jr."/>
            <person name="de Sa R.G."/>
            <person name="Santelli R.V."/>
            <person name="Sawasaki H.E."/>
            <person name="da Silva A.C.R."/>
            <person name="da Silva A.M."/>
            <person name="da Silva F.R."/>
            <person name="Silva W.A. Jr."/>
            <person name="da Silveira J.F."/>
            <person name="Silvestri M.L.Z."/>
            <person name="Siqueira W.J."/>
            <person name="de Souza A.A."/>
            <person name="de Souza A.P."/>
            <person name="Terenzi M.F."/>
            <person name="Truffi D."/>
            <person name="Tsai S.M."/>
            <person name="Tsuhako M.H."/>
            <person name="Vallada H."/>
            <person name="Van Sluys M.A."/>
            <person name="Verjovski-Almeida S."/>
            <person name="Vettore A.L."/>
            <person name="Zago M.A."/>
            <person name="Zatz M."/>
            <person name="Meidanis J."/>
            <person name="Setubal J.C."/>
        </authorList>
    </citation>
    <scope>NUCLEOTIDE SEQUENCE [LARGE SCALE GENOMIC DNA]</scope>
    <source>
        <strain>9a5c</strain>
    </source>
</reference>
<comment type="function">
    <text evidence="1">Can catalyze the hydrolysis of ATP in the presence of single-stranded DNA, the ATP-dependent uptake of single-stranded DNA by duplex DNA, and the ATP-dependent hybridization of homologous single-stranded DNAs. It interacts with LexA causing its activation and leading to its autocatalytic cleavage.</text>
</comment>
<comment type="subcellular location">
    <subcellularLocation>
        <location evidence="1">Cytoplasm</location>
    </subcellularLocation>
</comment>
<comment type="similarity">
    <text evidence="1">Belongs to the RecA family.</text>
</comment>
<dbReference type="EMBL" id="AE003849">
    <property type="protein sequence ID" value="AAF82936.1"/>
    <property type="molecule type" value="Genomic_DNA"/>
</dbReference>
<dbReference type="PIR" id="B82844">
    <property type="entry name" value="B82844"/>
</dbReference>
<dbReference type="RefSeq" id="WP_010892669.1">
    <property type="nucleotide sequence ID" value="NC_002488.3"/>
</dbReference>
<dbReference type="SMR" id="Q9PH23"/>
<dbReference type="STRING" id="160492.XF_0123"/>
<dbReference type="KEGG" id="xfa:XF_0123"/>
<dbReference type="eggNOG" id="COG0468">
    <property type="taxonomic scope" value="Bacteria"/>
</dbReference>
<dbReference type="HOGENOM" id="CLU_040469_3_2_6"/>
<dbReference type="Proteomes" id="UP000000812">
    <property type="component" value="Chromosome"/>
</dbReference>
<dbReference type="GO" id="GO:0005829">
    <property type="term" value="C:cytosol"/>
    <property type="evidence" value="ECO:0007669"/>
    <property type="project" value="TreeGrafter"/>
</dbReference>
<dbReference type="GO" id="GO:0005524">
    <property type="term" value="F:ATP binding"/>
    <property type="evidence" value="ECO:0007669"/>
    <property type="project" value="UniProtKB-UniRule"/>
</dbReference>
<dbReference type="GO" id="GO:0016887">
    <property type="term" value="F:ATP hydrolysis activity"/>
    <property type="evidence" value="ECO:0007669"/>
    <property type="project" value="InterPro"/>
</dbReference>
<dbReference type="GO" id="GO:0140664">
    <property type="term" value="F:ATP-dependent DNA damage sensor activity"/>
    <property type="evidence" value="ECO:0007669"/>
    <property type="project" value="InterPro"/>
</dbReference>
<dbReference type="GO" id="GO:0003684">
    <property type="term" value="F:damaged DNA binding"/>
    <property type="evidence" value="ECO:0007669"/>
    <property type="project" value="UniProtKB-UniRule"/>
</dbReference>
<dbReference type="GO" id="GO:0003697">
    <property type="term" value="F:single-stranded DNA binding"/>
    <property type="evidence" value="ECO:0007669"/>
    <property type="project" value="UniProtKB-UniRule"/>
</dbReference>
<dbReference type="GO" id="GO:0006310">
    <property type="term" value="P:DNA recombination"/>
    <property type="evidence" value="ECO:0007669"/>
    <property type="project" value="UniProtKB-UniRule"/>
</dbReference>
<dbReference type="GO" id="GO:0006281">
    <property type="term" value="P:DNA repair"/>
    <property type="evidence" value="ECO:0007669"/>
    <property type="project" value="UniProtKB-UniRule"/>
</dbReference>
<dbReference type="GO" id="GO:0009432">
    <property type="term" value="P:SOS response"/>
    <property type="evidence" value="ECO:0000269"/>
    <property type="project" value="CollecTF"/>
</dbReference>
<dbReference type="CDD" id="cd00983">
    <property type="entry name" value="RecA"/>
    <property type="match status" value="1"/>
</dbReference>
<dbReference type="FunFam" id="3.40.50.300:FF:000087">
    <property type="entry name" value="Recombinase RecA"/>
    <property type="match status" value="1"/>
</dbReference>
<dbReference type="Gene3D" id="3.40.50.300">
    <property type="entry name" value="P-loop containing nucleotide triphosphate hydrolases"/>
    <property type="match status" value="1"/>
</dbReference>
<dbReference type="HAMAP" id="MF_00268">
    <property type="entry name" value="RecA"/>
    <property type="match status" value="1"/>
</dbReference>
<dbReference type="InterPro" id="IPR003593">
    <property type="entry name" value="AAA+_ATPase"/>
</dbReference>
<dbReference type="InterPro" id="IPR013765">
    <property type="entry name" value="DNA_recomb/repair_RecA"/>
</dbReference>
<dbReference type="InterPro" id="IPR020584">
    <property type="entry name" value="DNA_recomb/repair_RecA_CS"/>
</dbReference>
<dbReference type="InterPro" id="IPR027417">
    <property type="entry name" value="P-loop_NTPase"/>
</dbReference>
<dbReference type="InterPro" id="IPR049261">
    <property type="entry name" value="RecA-like_C"/>
</dbReference>
<dbReference type="InterPro" id="IPR049428">
    <property type="entry name" value="RecA-like_N"/>
</dbReference>
<dbReference type="InterPro" id="IPR020588">
    <property type="entry name" value="RecA_ATP-bd"/>
</dbReference>
<dbReference type="InterPro" id="IPR023400">
    <property type="entry name" value="RecA_C_sf"/>
</dbReference>
<dbReference type="InterPro" id="IPR020587">
    <property type="entry name" value="RecA_monomer-monomer_interface"/>
</dbReference>
<dbReference type="NCBIfam" id="TIGR02012">
    <property type="entry name" value="tigrfam_recA"/>
    <property type="match status" value="1"/>
</dbReference>
<dbReference type="PANTHER" id="PTHR45900:SF1">
    <property type="entry name" value="MITOCHONDRIAL DNA REPAIR PROTEIN RECA HOMOLOG-RELATED"/>
    <property type="match status" value="1"/>
</dbReference>
<dbReference type="PANTHER" id="PTHR45900">
    <property type="entry name" value="RECA"/>
    <property type="match status" value="1"/>
</dbReference>
<dbReference type="Pfam" id="PF00154">
    <property type="entry name" value="RecA"/>
    <property type="match status" value="1"/>
</dbReference>
<dbReference type="Pfam" id="PF21096">
    <property type="entry name" value="RecA_C"/>
    <property type="match status" value="1"/>
</dbReference>
<dbReference type="PRINTS" id="PR00142">
    <property type="entry name" value="RECA"/>
</dbReference>
<dbReference type="SMART" id="SM00382">
    <property type="entry name" value="AAA"/>
    <property type="match status" value="1"/>
</dbReference>
<dbReference type="SUPFAM" id="SSF52540">
    <property type="entry name" value="P-loop containing nucleoside triphosphate hydrolases"/>
    <property type="match status" value="1"/>
</dbReference>
<dbReference type="SUPFAM" id="SSF54752">
    <property type="entry name" value="RecA protein, C-terminal domain"/>
    <property type="match status" value="1"/>
</dbReference>
<dbReference type="PROSITE" id="PS00321">
    <property type="entry name" value="RECA_1"/>
    <property type="match status" value="1"/>
</dbReference>
<dbReference type="PROSITE" id="PS50162">
    <property type="entry name" value="RECA_2"/>
    <property type="match status" value="1"/>
</dbReference>
<dbReference type="PROSITE" id="PS50163">
    <property type="entry name" value="RECA_3"/>
    <property type="match status" value="1"/>
</dbReference>